<evidence type="ECO:0000255" key="1"/>
<evidence type="ECO:0000269" key="2">
    <source>
    </source>
</evidence>
<evidence type="ECO:0000269" key="3">
    <source>
    </source>
</evidence>
<evidence type="ECO:0000269" key="4">
    <source>
    </source>
</evidence>
<evidence type="ECO:0000269" key="5">
    <source>
    </source>
</evidence>
<evidence type="ECO:0000305" key="6"/>
<dbReference type="EMBL" id="X00547">
    <property type="protein sequence ID" value="CAA25218.1"/>
    <property type="molecule type" value="Genomic_DNA"/>
</dbReference>
<dbReference type="EMBL" id="U00096">
    <property type="protein sequence ID" value="AAC74056.1"/>
    <property type="molecule type" value="Genomic_DNA"/>
</dbReference>
<dbReference type="EMBL" id="AP009048">
    <property type="protein sequence ID" value="BAA35735.1"/>
    <property type="molecule type" value="Genomic_DNA"/>
</dbReference>
<dbReference type="PIR" id="S07180">
    <property type="entry name" value="S07180"/>
</dbReference>
<dbReference type="RefSeq" id="NP_415490.1">
    <property type="nucleotide sequence ID" value="NC_000913.3"/>
</dbReference>
<dbReference type="RefSeq" id="WP_000375136.1">
    <property type="nucleotide sequence ID" value="NZ_STEB01000006.1"/>
</dbReference>
<dbReference type="SMR" id="P0AAC6"/>
<dbReference type="BioGRID" id="4260037">
    <property type="interactions" value="11"/>
</dbReference>
<dbReference type="DIP" id="DIP-47918N"/>
<dbReference type="FunCoup" id="P0AAC6">
    <property type="interactions" value="365"/>
</dbReference>
<dbReference type="IntAct" id="P0AAC6">
    <property type="interactions" value="1"/>
</dbReference>
<dbReference type="STRING" id="511145.b0970"/>
<dbReference type="TCDB" id="1.A.14.2.1">
    <property type="family name" value="the calcium transporter a (cata) family (formerly the testis-enhanced gene transfer (tegt) family)"/>
</dbReference>
<dbReference type="PaxDb" id="511145-b0970"/>
<dbReference type="DNASU" id="946016"/>
<dbReference type="EnsemblBacteria" id="AAC74056">
    <property type="protein sequence ID" value="AAC74056"/>
    <property type="gene ID" value="b0970"/>
</dbReference>
<dbReference type="GeneID" id="89515849"/>
<dbReference type="GeneID" id="946016"/>
<dbReference type="KEGG" id="ecj:JW0953"/>
<dbReference type="KEGG" id="eco:b0970"/>
<dbReference type="KEGG" id="ecoc:C3026_05925"/>
<dbReference type="PATRIC" id="fig|1411691.4.peg.1303"/>
<dbReference type="EchoBASE" id="EB1104"/>
<dbReference type="eggNOG" id="COG0670">
    <property type="taxonomic scope" value="Bacteria"/>
</dbReference>
<dbReference type="HOGENOM" id="CLU_058671_2_1_6"/>
<dbReference type="InParanoid" id="P0AAC6"/>
<dbReference type="OMA" id="MGDVIGM"/>
<dbReference type="OrthoDB" id="9813298at2"/>
<dbReference type="PhylomeDB" id="P0AAC6"/>
<dbReference type="BioCyc" id="EcoCyc:EG11113-MONOMER"/>
<dbReference type="PRO" id="PR:P0AAC6"/>
<dbReference type="Proteomes" id="UP000000625">
    <property type="component" value="Chromosome"/>
</dbReference>
<dbReference type="GO" id="GO:0016020">
    <property type="term" value="C:membrane"/>
    <property type="evidence" value="ECO:0000314"/>
    <property type="project" value="EcoCyc"/>
</dbReference>
<dbReference type="GO" id="GO:0005886">
    <property type="term" value="C:plasma membrane"/>
    <property type="evidence" value="ECO:0000314"/>
    <property type="project" value="EcoCyc"/>
</dbReference>
<dbReference type="GO" id="GO:0005262">
    <property type="term" value="F:calcium channel activity"/>
    <property type="evidence" value="ECO:0000318"/>
    <property type="project" value="GO_Central"/>
</dbReference>
<dbReference type="GO" id="GO:0043066">
    <property type="term" value="P:negative regulation of apoptotic process"/>
    <property type="evidence" value="ECO:0007669"/>
    <property type="project" value="InterPro"/>
</dbReference>
<dbReference type="GO" id="GO:0030162">
    <property type="term" value="P:regulation of proteolysis"/>
    <property type="evidence" value="ECO:0000315"/>
    <property type="project" value="EcoCyc"/>
</dbReference>
<dbReference type="CDD" id="cd10433">
    <property type="entry name" value="YccA_like"/>
    <property type="match status" value="1"/>
</dbReference>
<dbReference type="InterPro" id="IPR006213">
    <property type="entry name" value="Bax_inhbtr1_CS"/>
</dbReference>
<dbReference type="InterPro" id="IPR006214">
    <property type="entry name" value="Bax_inhibitor_1-related"/>
</dbReference>
<dbReference type="NCBIfam" id="NF007765">
    <property type="entry name" value="PRK10447.1"/>
    <property type="match status" value="1"/>
</dbReference>
<dbReference type="PANTHER" id="PTHR23291">
    <property type="entry name" value="BAX INHIBITOR-RELATED"/>
    <property type="match status" value="1"/>
</dbReference>
<dbReference type="PANTHER" id="PTHR23291:SF115">
    <property type="entry name" value="MODULATOR OF FTSH PROTEASE YCCA"/>
    <property type="match status" value="1"/>
</dbReference>
<dbReference type="Pfam" id="PF01027">
    <property type="entry name" value="Bax1-I"/>
    <property type="match status" value="1"/>
</dbReference>
<dbReference type="PROSITE" id="PS01243">
    <property type="entry name" value="BI1"/>
    <property type="match status" value="1"/>
</dbReference>
<keyword id="KW-0997">Cell inner membrane</keyword>
<keyword id="KW-1003">Cell membrane</keyword>
<keyword id="KW-0472">Membrane</keyword>
<keyword id="KW-1185">Reference proteome</keyword>
<keyword id="KW-0812">Transmembrane</keyword>
<keyword id="KW-1133">Transmembrane helix</keyword>
<organism>
    <name type="scientific">Escherichia coli (strain K12)</name>
    <dbReference type="NCBI Taxonomy" id="83333"/>
    <lineage>
        <taxon>Bacteria</taxon>
        <taxon>Pseudomonadati</taxon>
        <taxon>Pseudomonadota</taxon>
        <taxon>Gammaproteobacteria</taxon>
        <taxon>Enterobacterales</taxon>
        <taxon>Enterobacteriaceae</taxon>
        <taxon>Escherichia</taxon>
    </lineage>
</organism>
<gene>
    <name type="primary">yccA</name>
    <name type="ordered locus">b0970</name>
    <name type="ordered locus">JW0953</name>
</gene>
<reference key="1">
    <citation type="journal article" date="1984" name="EMBO J.">
        <title>The E. coli divE mutation, which differentially inhibits synthesis of certain proteins, is in tRNASer1.</title>
        <authorList>
            <person name="Tamura F."/>
            <person name="Nishimura S."/>
            <person name="Ohki M."/>
        </authorList>
    </citation>
    <scope>NUCLEOTIDE SEQUENCE [GENOMIC DNA]</scope>
</reference>
<reference key="2">
    <citation type="journal article" date="1996" name="DNA Res.">
        <title>A 718-kb DNA sequence of the Escherichia coli K-12 genome corresponding to the 12.7-28.0 min region on the linkage map.</title>
        <authorList>
            <person name="Oshima T."/>
            <person name="Aiba H."/>
            <person name="Baba T."/>
            <person name="Fujita K."/>
            <person name="Hayashi K."/>
            <person name="Honjo A."/>
            <person name="Ikemoto K."/>
            <person name="Inada T."/>
            <person name="Itoh T."/>
            <person name="Kajihara M."/>
            <person name="Kanai K."/>
            <person name="Kashimoto K."/>
            <person name="Kimura S."/>
            <person name="Kitagawa M."/>
            <person name="Makino K."/>
            <person name="Masuda S."/>
            <person name="Miki T."/>
            <person name="Mizobuchi K."/>
            <person name="Mori H."/>
            <person name="Motomura K."/>
            <person name="Nakamura Y."/>
            <person name="Nashimoto H."/>
            <person name="Nishio Y."/>
            <person name="Saito N."/>
            <person name="Sampei G."/>
            <person name="Seki Y."/>
            <person name="Tagami H."/>
            <person name="Takemoto K."/>
            <person name="Wada C."/>
            <person name="Yamamoto Y."/>
            <person name="Yano M."/>
            <person name="Horiuchi T."/>
        </authorList>
    </citation>
    <scope>NUCLEOTIDE SEQUENCE [LARGE SCALE GENOMIC DNA]</scope>
    <source>
        <strain>K12 / W3110 / ATCC 27325 / DSM 5911</strain>
    </source>
</reference>
<reference key="3">
    <citation type="journal article" date="1997" name="Science">
        <title>The complete genome sequence of Escherichia coli K-12.</title>
        <authorList>
            <person name="Blattner F.R."/>
            <person name="Plunkett G. III"/>
            <person name="Bloch C.A."/>
            <person name="Perna N.T."/>
            <person name="Burland V."/>
            <person name="Riley M."/>
            <person name="Collado-Vides J."/>
            <person name="Glasner J.D."/>
            <person name="Rode C.K."/>
            <person name="Mayhew G.F."/>
            <person name="Gregor J."/>
            <person name="Davis N.W."/>
            <person name="Kirkpatrick H.A."/>
            <person name="Goeden M.A."/>
            <person name="Rose D.J."/>
            <person name="Mau B."/>
            <person name="Shao Y."/>
        </authorList>
    </citation>
    <scope>NUCLEOTIDE SEQUENCE [LARGE SCALE GENOMIC DNA]</scope>
    <source>
        <strain>K12 / MG1655 / ATCC 47076</strain>
    </source>
</reference>
<reference key="4">
    <citation type="journal article" date="2006" name="Mol. Syst. Biol.">
        <title>Highly accurate genome sequences of Escherichia coli K-12 strains MG1655 and W3110.</title>
        <authorList>
            <person name="Hayashi K."/>
            <person name="Morooka N."/>
            <person name="Yamamoto Y."/>
            <person name="Fujita K."/>
            <person name="Isono K."/>
            <person name="Choi S."/>
            <person name="Ohtsubo E."/>
            <person name="Baba T."/>
            <person name="Wanner B.L."/>
            <person name="Mori H."/>
            <person name="Horiuchi T."/>
        </authorList>
    </citation>
    <scope>NUCLEOTIDE SEQUENCE [LARGE SCALE GENOMIC DNA]</scope>
    <source>
        <strain>K12 / W3110 / ATCC 27325 / DSM 5911</strain>
    </source>
</reference>
<reference key="5">
    <citation type="journal article" date="1998" name="J. Mol. Biol.">
        <title>Different pathways for protein degradation by the FtsH/HflKC membrane-embedded protease complex: an implication from the interference by a mutant form of a new substrate protein, YccA.</title>
        <authorList>
            <person name="Kihara A."/>
            <person name="Akiyama Y."/>
            <person name="Ito K."/>
        </authorList>
    </citation>
    <scope>SUBSTRATE FOR FTSH</scope>
    <scope>INTERACTION WITH FTSH AND HFLKC</scope>
    <scope>MUTAGENESIS OF 5-VAL--THR-12</scope>
    <scope>DISRUPTION PHENOTYPE</scope>
    <source>
        <strain>K12 / CSH26 / AD16</strain>
    </source>
</reference>
<reference key="6">
    <citation type="journal article" date="1999" name="EMBO J.">
        <title>Dislocation of membrane proteins in FtsH-mediated proteolysis.</title>
        <authorList>
            <person name="Kihara A."/>
            <person name="Akiyama Y."/>
            <person name="Ito K."/>
        </authorList>
    </citation>
    <scope>TOPOLOGY</scope>
    <scope>MUTAGENESIS OF 1-MET--THR-12</scope>
    <source>
        <strain>K12 / CSH26 / AD16</strain>
    </source>
</reference>
<reference key="7">
    <citation type="journal article" date="2005" name="Science">
        <title>Global topology analysis of the Escherichia coli inner membrane proteome.</title>
        <authorList>
            <person name="Daley D.O."/>
            <person name="Rapp M."/>
            <person name="Granseth E."/>
            <person name="Melen K."/>
            <person name="Drew D."/>
            <person name="von Heijne G."/>
        </authorList>
    </citation>
    <scope>TOPOLOGY [LARGE SCALE ANALYSIS]</scope>
    <source>
        <strain>K12 / MG1655 / ATCC 47076</strain>
    </source>
</reference>
<reference key="8">
    <citation type="journal article" date="2009" name="Science">
        <title>Effects of antibiotics and a proto-oncogene homolog on destruction of protein translocator SecY.</title>
        <authorList>
            <person name="van Stelten J."/>
            <person name="Silva F."/>
            <person name="Belin D."/>
            <person name="Silhavy T.J."/>
        </authorList>
    </citation>
    <scope>FUNCTION IN MODULATING FTSH ACTIVITY</scope>
    <scope>INDUCTION</scope>
    <source>
        <strain>K12 / MC4100</strain>
    </source>
</reference>
<reference key="9">
    <citation type="journal article" date="2009" name="J. Biochem.">
        <title>Quality control of cytoplasmic membrane proteins in Escherichia coli.</title>
        <authorList>
            <person name="Akiyama Y."/>
        </authorList>
    </citation>
    <scope>REVIEW</scope>
</reference>
<feature type="chain" id="PRO_0000179102" description="Modulator of FtsH protease YccA">
    <location>
        <begin position="1"/>
        <end position="219"/>
    </location>
</feature>
<feature type="topological domain" description="Cytoplasmic" evidence="6">
    <location>
        <begin position="1"/>
        <end position="22"/>
    </location>
</feature>
<feature type="transmembrane region" description="Helical" evidence="1">
    <location>
        <begin position="23"/>
        <end position="43"/>
    </location>
</feature>
<feature type="topological domain" description="Extracellular" evidence="6">
    <location>
        <begin position="44"/>
        <end position="46"/>
    </location>
</feature>
<feature type="transmembrane region" description="Helical" evidence="1">
    <location>
        <begin position="47"/>
        <end position="64"/>
    </location>
</feature>
<feature type="topological domain" description="Cytoplasmic" evidence="6">
    <location>
        <begin position="65"/>
        <end position="73"/>
    </location>
</feature>
<feature type="transmembrane region" description="Helical" evidence="1">
    <location>
        <begin position="74"/>
        <end position="94"/>
    </location>
</feature>
<feature type="topological domain" description="Extracellular" evidence="6">
    <location>
        <begin position="95"/>
        <end position="104"/>
    </location>
</feature>
<feature type="transmembrane region" description="Helical" evidence="1">
    <location>
        <begin position="105"/>
        <end position="125"/>
    </location>
</feature>
<feature type="topological domain" description="Cytoplasmic" evidence="6">
    <location>
        <begin position="126"/>
        <end position="132"/>
    </location>
</feature>
<feature type="transmembrane region" description="Helical" evidence="1">
    <location>
        <begin position="133"/>
        <end position="153"/>
    </location>
</feature>
<feature type="topological domain" description="Extracellular" evidence="6">
    <location>
        <begin position="154"/>
        <end position="157"/>
    </location>
</feature>
<feature type="transmembrane region" description="Helical" evidence="1">
    <location>
        <begin position="158"/>
        <end position="178"/>
    </location>
</feature>
<feature type="topological domain" description="Cytoplasmic" evidence="6">
    <location>
        <begin position="179"/>
        <end position="195"/>
    </location>
</feature>
<feature type="transmembrane region" description="Helical" evidence="1">
    <location>
        <begin position="196"/>
        <end position="216"/>
    </location>
</feature>
<feature type="topological domain" description="Extracellular">
    <location>
        <begin position="217"/>
        <end position="219"/>
    </location>
</feature>
<feature type="mutagenesis site" description="Protein is as sensitive to FtsH degradation as the wild-type." evidence="2">
    <original>MDRIVSSSHDRT</original>
    <variation>MTMITPSLHDRI</variation>
    <location>
        <begin position="1"/>
        <end position="12"/>
    </location>
</feature>
<feature type="mutagenesis site" description="In yccA11; increases the half-life of overexpressed SecY, F(0) ATP synthase subunit a and itself in an HflKC-dependent fashion, but has no effect on degradation of cytosolic substrates sigma-32 or the phage lambda cII protein. Partially dominant over the wild-type allele. This protein interacts with but is not degraded by FtsH." evidence="5">
    <location>
        <begin position="5"/>
        <end position="12"/>
    </location>
</feature>
<name>YCCA_ECOLI</name>
<comment type="function">
    <text evidence="4">Negatively modulates the activity of the FtsH protease for membrane substrates. Overexpression or stabilizing YccA counteracts the FtsH-mediated degradation of SecY when the SecYEG preprotein translocator is jammed.</text>
</comment>
<comment type="subunit">
    <text>Both wild-type and the yccA11 mutant interact with the FtsH/HflKC complex.</text>
</comment>
<comment type="subcellular location">
    <subcellularLocation>
        <location>Cell inner membrane</location>
        <topology>Multi-pass membrane protein</topology>
    </subcellularLocation>
    <text evidence="2 3">There are conflicting results regarding the localization of the C-terminus of this protein: According to a report, the C-terminus localizes in the periplasm (PubMed:10357810). Another report gives the C-terminus in the cytoplasm (PubMed:15919996). We show the periplasmic location.</text>
</comment>
<comment type="induction">
    <text evidence="4">Regulated in a Cpx-dependent fashion.</text>
</comment>
<comment type="PTM">
    <text>YccA is processively degraded by FtsH; degradation initiates via the approximately 20 residue N-terminal tail in a sequence non-specific manner. The deletion mutant yccA11 is resistant to FtsH-mediated degradation, probably because it is too short to be degraded by FtsH.</text>
</comment>
<comment type="disruption phenotype">
    <text evidence="5">No effect on SecY degradation.</text>
</comment>
<comment type="similarity">
    <text evidence="6">Belongs to the BI1 family.</text>
</comment>
<protein>
    <recommendedName>
        <fullName>Modulator of FtsH protease YccA</fullName>
    </recommendedName>
</protein>
<accession>P0AAC6</accession>
<accession>P06967</accession>
<sequence>MDRIVSSSHDRTSLLSTHKVLRNTYFLLSLTLAFSAITATASTVLMLPSPGLILTLVGMYGLMFLTYKTANKPTGIISAFAFTGFLGYILGPILNTYLSAGMGDVIAMALGGTALVFFCCSAYVLTTRKDMSFLGGMLMAGIVVVLIGMVANIFLQLPALHLAISAVFILISSGAILFETSNIIHGGETNYIRATVSLYVSLYNIFVSLLSILGFASRD</sequence>
<proteinExistence type="evidence at protein level"/>